<sequence>MASGVAVSDGVIKVFNDMKVRKSSTPEEVKKRKKAVLFCLSEDKKNIILEEGKEILVGDVGQTVDDPYATFVKMLPDKDCRYALYDATYETKESKKEDLVFIFWAPECAPLKSKMIYASSKDAIKKKLTGIKHELQANCYEEVKDRCTLAEKLGGSAVISLEGKPL</sequence>
<protein>
    <recommendedName>
        <fullName>Cofilin-1</fullName>
    </recommendedName>
    <alternativeName>
        <fullName>Cofilin, non-muscle isoform</fullName>
    </alternativeName>
</protein>
<reference key="1">
    <citation type="submission" date="2004-07" db="EMBL/GenBank/DDBJ databases">
        <title>Cloning and characterization of cofilin-1 expression in cyclic and early pregnant ovine endometrium following isolation by yeast-two hybrid screening.</title>
        <authorList>
            <person name="Welker J.E."/>
            <person name="Ott T.L."/>
        </authorList>
    </citation>
    <scope>NUCLEOTIDE SEQUENCE [MRNA]</scope>
    <source>
        <tissue>Endometrium</tissue>
    </source>
</reference>
<comment type="function">
    <text evidence="2 3">Binds to F-actin and exhibits pH-sensitive F-actin depolymerizing activity (By similarity). Important for normal progress through mitosis and normal cytokinesis (By similarity). In conjunction with the subcortical maternal complex (SCMC), plays an essential role for zygotes to progress beyond the first embryonic cell divisions via regulation of actin dynamics (By similarity). Required for the centralization of the mitotic spindle and symmetric division of zygotes (By similarity). Plays a role in the regulation of cell morphology and cytoskeletal organization in epithelial cells (By similarity). Required for the up-regulation of atypical chemokine receptor ACKR2 from endosomal compartment to cell membrane, increasing its efficiency in chemokine uptake and degradation (By similarity). Required for neural tube morphogenesis and neural crest cell migration (By similarity).</text>
</comment>
<comment type="subunit">
    <text evidence="1 2">Can bind G- and F-actin in a 1:1 ratio of cofilin to actin (By similarity). It is a major component of intranuclear and cytoplasmic actin rods (By similarity). Interacts with the subcortical maternal complex (SCMC) via interaction with TLE6 and NLRP5 (By similarity). Interacts with C9orf72 (By similarity).</text>
</comment>
<comment type="subcellular location">
    <subcellularLocation>
        <location evidence="1">Nucleus matrix</location>
    </subcellularLocation>
    <subcellularLocation>
        <location evidence="1">Cytoplasm</location>
        <location evidence="1">Cytoskeleton</location>
    </subcellularLocation>
    <subcellularLocation>
        <location evidence="1">Cell projection</location>
        <location evidence="1">Ruffle membrane</location>
        <topology evidence="1">Peripheral membrane protein</topology>
        <orientation evidence="1">Cytoplasmic side</orientation>
    </subcellularLocation>
    <subcellularLocation>
        <location evidence="1">Cell projection</location>
        <location evidence="1">Lamellipodium membrane</location>
        <topology evidence="1">Peripheral membrane protein</topology>
        <orientation evidence="1">Cytoplasmic side</orientation>
    </subcellularLocation>
    <subcellularLocation>
        <location evidence="2">Cell projection</location>
        <location evidence="2">Lamellipodium</location>
    </subcellularLocation>
    <subcellularLocation>
        <location evidence="2">Cell projection</location>
        <location evidence="2">Growth cone</location>
    </subcellularLocation>
    <subcellularLocation>
        <location evidence="2">Cell projection</location>
        <location evidence="2">Axon</location>
    </subcellularLocation>
    <text evidence="1 3">Colocalizes with the actin cytoskeleton in membrane ruffles and lamellipodia. Detected at the cleavage furrow and contractile ring during cytokinesis. Almost completely in nucleus in cells exposed to heat shock or 10% dimethyl sulfoxide.</text>
</comment>
<comment type="PTM">
    <text evidence="4">Inactivated by phosphorylation on Ser-3. Phosphorylated on Ser-3 in resting cells (By similarity). Dephosphorylated by PDXP/chronophin; this restores its activity in promoting actin filament depolymerization. The phosphorylation of Ser-24 may prevent recognition of the nuclear localization signal (By similarity). Phosphorylated via a ARRB1-RAC1-LIMK1-PAK1 cascade upon active ligand stimulation of atypical chemokine receptor ACKR2 (By similarity).</text>
</comment>
<comment type="similarity">
    <text evidence="7">Belongs to the actin-binding proteins ADF family.</text>
</comment>
<organism>
    <name type="scientific">Ovis aries</name>
    <name type="common">Sheep</name>
    <dbReference type="NCBI Taxonomy" id="9940"/>
    <lineage>
        <taxon>Eukaryota</taxon>
        <taxon>Metazoa</taxon>
        <taxon>Chordata</taxon>
        <taxon>Craniata</taxon>
        <taxon>Vertebrata</taxon>
        <taxon>Euteleostomi</taxon>
        <taxon>Mammalia</taxon>
        <taxon>Eutheria</taxon>
        <taxon>Laurasiatheria</taxon>
        <taxon>Artiodactyla</taxon>
        <taxon>Ruminantia</taxon>
        <taxon>Pecora</taxon>
        <taxon>Bovidae</taxon>
        <taxon>Caprinae</taxon>
        <taxon>Ovis</taxon>
    </lineage>
</organism>
<gene>
    <name type="primary">CFL1</name>
</gene>
<evidence type="ECO:0000250" key="1">
    <source>
        <dbReference type="UniProtKB" id="P10668"/>
    </source>
</evidence>
<evidence type="ECO:0000250" key="2">
    <source>
        <dbReference type="UniProtKB" id="P18760"/>
    </source>
</evidence>
<evidence type="ECO:0000250" key="3">
    <source>
        <dbReference type="UniProtKB" id="P23528"/>
    </source>
</evidence>
<evidence type="ECO:0000250" key="4">
    <source>
        <dbReference type="UniProtKB" id="P45695"/>
    </source>
</evidence>
<evidence type="ECO:0000255" key="5"/>
<evidence type="ECO:0000255" key="6">
    <source>
        <dbReference type="PROSITE-ProRule" id="PRU00599"/>
    </source>
</evidence>
<evidence type="ECO:0000305" key="7"/>
<proteinExistence type="evidence at transcript level"/>
<name>COF1_SHEEP</name>
<feature type="initiator methionine" description="Removed" evidence="3">
    <location>
        <position position="1"/>
    </location>
</feature>
<feature type="chain" id="PRO_0000214903" description="Cofilin-1">
    <location>
        <begin position="2"/>
        <end position="166"/>
    </location>
</feature>
<feature type="domain" description="ADF-H" evidence="6">
    <location>
        <begin position="4"/>
        <end position="153"/>
    </location>
</feature>
<feature type="short sequence motif" description="Nuclear localization signal" evidence="5">
    <location>
        <begin position="30"/>
        <end position="34"/>
    </location>
</feature>
<feature type="modified residue" description="N-acetylalanine" evidence="3">
    <location>
        <position position="2"/>
    </location>
</feature>
<feature type="modified residue" description="Phosphoserine" evidence="3">
    <location>
        <position position="3"/>
    </location>
</feature>
<feature type="modified residue" description="Phosphoserine" evidence="2">
    <location>
        <position position="8"/>
    </location>
</feature>
<feature type="modified residue" description="N6-acetyllysine" evidence="3">
    <location>
        <position position="13"/>
    </location>
</feature>
<feature type="modified residue" description="Phosphothreonine" evidence="3">
    <location>
        <position position="25"/>
    </location>
</feature>
<feature type="modified residue" description="Phosphoserine" evidence="3">
    <location>
        <position position="41"/>
    </location>
</feature>
<feature type="modified residue" description="Phosphotyrosine" evidence="3">
    <location>
        <position position="68"/>
    </location>
</feature>
<feature type="modified residue" description="N6-acetyllysine" evidence="3">
    <location>
        <position position="73"/>
    </location>
</feature>
<feature type="modified residue" description="Phosphotyrosine" evidence="3">
    <location>
        <position position="140"/>
    </location>
</feature>
<feature type="modified residue" description="N6-acetyllysine" evidence="3">
    <location>
        <position position="144"/>
    </location>
</feature>
<feature type="modified residue" description="Phosphoserine" evidence="3">
    <location>
        <position position="156"/>
    </location>
</feature>
<feature type="cross-link" description="Glycyl lysine isopeptide (Lys-Gly) (interchain with G-Cter in SUMO2)" evidence="3">
    <location>
        <position position="132"/>
    </location>
</feature>
<dbReference type="EMBL" id="AY676116">
    <property type="protein sequence ID" value="AAT77679.1"/>
    <property type="molecule type" value="mRNA"/>
</dbReference>
<dbReference type="RefSeq" id="NP_001009484.1">
    <property type="nucleotide sequence ID" value="NM_001009484.2"/>
</dbReference>
<dbReference type="SMR" id="Q6B7M7"/>
<dbReference type="STRING" id="9940.ENSOARP00000019439"/>
<dbReference type="PaxDb" id="9940-ENSOARP00000019439"/>
<dbReference type="Ensembl" id="ENSOART00185057412">
    <property type="protein sequence ID" value="ENSOARP00185029004"/>
    <property type="gene ID" value="ENSOARG00185034474"/>
</dbReference>
<dbReference type="Ensembl" id="ENSOART00215097009">
    <property type="protein sequence ID" value="ENSOARP00215052206"/>
    <property type="gene ID" value="ENSOARG00215057843"/>
</dbReference>
<dbReference type="Ensembl" id="ENSOART00225077050">
    <property type="protein sequence ID" value="ENSOARP00225039707"/>
    <property type="gene ID" value="ENSOARG00225046359"/>
</dbReference>
<dbReference type="GeneID" id="494432"/>
<dbReference type="KEGG" id="oas:494432"/>
<dbReference type="CTD" id="1072"/>
<dbReference type="eggNOG" id="KOG1735">
    <property type="taxonomic scope" value="Eukaryota"/>
</dbReference>
<dbReference type="OrthoDB" id="10249245at2759"/>
<dbReference type="Proteomes" id="UP000002356">
    <property type="component" value="Unplaced"/>
</dbReference>
<dbReference type="GO" id="GO:0015629">
    <property type="term" value="C:actin cytoskeleton"/>
    <property type="evidence" value="ECO:0007669"/>
    <property type="project" value="InterPro"/>
</dbReference>
<dbReference type="GO" id="GO:0005737">
    <property type="term" value="C:cytoplasm"/>
    <property type="evidence" value="ECO:0007669"/>
    <property type="project" value="UniProtKB-KW"/>
</dbReference>
<dbReference type="GO" id="GO:0005925">
    <property type="term" value="C:focal adhesion"/>
    <property type="evidence" value="ECO:0007669"/>
    <property type="project" value="Ensembl"/>
</dbReference>
<dbReference type="GO" id="GO:0030426">
    <property type="term" value="C:growth cone"/>
    <property type="evidence" value="ECO:0007669"/>
    <property type="project" value="UniProtKB-SubCell"/>
</dbReference>
<dbReference type="GO" id="GO:0030027">
    <property type="term" value="C:lamellipodium"/>
    <property type="evidence" value="ECO:0000250"/>
    <property type="project" value="UniProtKB"/>
</dbReference>
<dbReference type="GO" id="GO:0031258">
    <property type="term" value="C:lamellipodium membrane"/>
    <property type="evidence" value="ECO:0007669"/>
    <property type="project" value="UniProtKB-SubCell"/>
</dbReference>
<dbReference type="GO" id="GO:0016363">
    <property type="term" value="C:nuclear matrix"/>
    <property type="evidence" value="ECO:0007669"/>
    <property type="project" value="UniProtKB-SubCell"/>
</dbReference>
<dbReference type="GO" id="GO:0032587">
    <property type="term" value="C:ruffle membrane"/>
    <property type="evidence" value="ECO:0007669"/>
    <property type="project" value="UniProtKB-SubCell"/>
</dbReference>
<dbReference type="GO" id="GO:0051015">
    <property type="term" value="F:actin filament binding"/>
    <property type="evidence" value="ECO:0000250"/>
    <property type="project" value="UniProtKB"/>
</dbReference>
<dbReference type="GO" id="GO:0030042">
    <property type="term" value="P:actin filament depolymerization"/>
    <property type="evidence" value="ECO:0007669"/>
    <property type="project" value="Ensembl"/>
</dbReference>
<dbReference type="GO" id="GO:0007015">
    <property type="term" value="P:actin filament organization"/>
    <property type="evidence" value="ECO:0000250"/>
    <property type="project" value="UniProtKB"/>
</dbReference>
<dbReference type="GO" id="GO:0007010">
    <property type="term" value="P:cytoskeleton organization"/>
    <property type="evidence" value="ECO:0000250"/>
    <property type="project" value="UniProtKB"/>
</dbReference>
<dbReference type="GO" id="GO:0051293">
    <property type="term" value="P:establishment of spindle localization"/>
    <property type="evidence" value="ECO:0000250"/>
    <property type="project" value="UniProtKB"/>
</dbReference>
<dbReference type="GO" id="GO:0044794">
    <property type="term" value="P:positive regulation by host of viral process"/>
    <property type="evidence" value="ECO:0007669"/>
    <property type="project" value="Ensembl"/>
</dbReference>
<dbReference type="GO" id="GO:0040019">
    <property type="term" value="P:positive regulation of embryonic development"/>
    <property type="evidence" value="ECO:0000250"/>
    <property type="project" value="UniProtKB"/>
</dbReference>
<dbReference type="GO" id="GO:0022604">
    <property type="term" value="P:regulation of cell morphogenesis"/>
    <property type="evidence" value="ECO:0000250"/>
    <property type="project" value="UniProtKB"/>
</dbReference>
<dbReference type="GO" id="GO:0061001">
    <property type="term" value="P:regulation of dendritic spine morphogenesis"/>
    <property type="evidence" value="ECO:0007669"/>
    <property type="project" value="Ensembl"/>
</dbReference>
<dbReference type="GO" id="GO:0009615">
    <property type="term" value="P:response to virus"/>
    <property type="evidence" value="ECO:0007669"/>
    <property type="project" value="Ensembl"/>
</dbReference>
<dbReference type="CDD" id="cd11286">
    <property type="entry name" value="ADF_cofilin_like"/>
    <property type="match status" value="1"/>
</dbReference>
<dbReference type="FunFam" id="3.40.20.10:FF:000010">
    <property type="entry name" value="Putative destrin"/>
    <property type="match status" value="1"/>
</dbReference>
<dbReference type="Gene3D" id="3.40.20.10">
    <property type="entry name" value="Severin"/>
    <property type="match status" value="1"/>
</dbReference>
<dbReference type="InterPro" id="IPR002108">
    <property type="entry name" value="ADF-H"/>
</dbReference>
<dbReference type="InterPro" id="IPR029006">
    <property type="entry name" value="ADF-H/Gelsolin-like_dom_sf"/>
</dbReference>
<dbReference type="InterPro" id="IPR017904">
    <property type="entry name" value="ADF/Cofilin"/>
</dbReference>
<dbReference type="PANTHER" id="PTHR11913">
    <property type="entry name" value="COFILIN-RELATED"/>
    <property type="match status" value="1"/>
</dbReference>
<dbReference type="Pfam" id="PF00241">
    <property type="entry name" value="Cofilin_ADF"/>
    <property type="match status" value="1"/>
</dbReference>
<dbReference type="PRINTS" id="PR00006">
    <property type="entry name" value="COFILIN"/>
</dbReference>
<dbReference type="SMART" id="SM00102">
    <property type="entry name" value="ADF"/>
    <property type="match status" value="1"/>
</dbReference>
<dbReference type="SUPFAM" id="SSF55753">
    <property type="entry name" value="Actin depolymerizing proteins"/>
    <property type="match status" value="1"/>
</dbReference>
<dbReference type="PROSITE" id="PS51263">
    <property type="entry name" value="ADF_H"/>
    <property type="match status" value="1"/>
</dbReference>
<keyword id="KW-0007">Acetylation</keyword>
<keyword id="KW-0009">Actin-binding</keyword>
<keyword id="KW-1003">Cell membrane</keyword>
<keyword id="KW-0966">Cell projection</keyword>
<keyword id="KW-0963">Cytoplasm</keyword>
<keyword id="KW-0206">Cytoskeleton</keyword>
<keyword id="KW-1017">Isopeptide bond</keyword>
<keyword id="KW-0472">Membrane</keyword>
<keyword id="KW-0539">Nucleus</keyword>
<keyword id="KW-0597">Phosphoprotein</keyword>
<keyword id="KW-1185">Reference proteome</keyword>
<keyword id="KW-0832">Ubl conjugation</keyword>
<accession>Q6B7M7</accession>